<keyword id="KW-0378">Hydrolase</keyword>
<keyword id="KW-0460">Magnesium</keyword>
<accession>C3KWA9</accession>
<name>COMB_CLOB6</name>
<comment type="catalytic activity">
    <reaction evidence="1">
        <text>(2R)-O-phospho-3-sulfolactate + H2O = (2R)-3-sulfolactate + phosphate</text>
        <dbReference type="Rhea" id="RHEA:23416"/>
        <dbReference type="ChEBI" id="CHEBI:15377"/>
        <dbReference type="ChEBI" id="CHEBI:15597"/>
        <dbReference type="ChEBI" id="CHEBI:43474"/>
        <dbReference type="ChEBI" id="CHEBI:58738"/>
        <dbReference type="EC" id="3.1.3.71"/>
    </reaction>
</comment>
<comment type="cofactor">
    <cofactor evidence="1">
        <name>Mg(2+)</name>
        <dbReference type="ChEBI" id="CHEBI:18420"/>
    </cofactor>
</comment>
<comment type="similarity">
    <text evidence="1">Belongs to the ComB family.</text>
</comment>
<gene>
    <name evidence="1" type="primary">comB</name>
    <name type="ordered locus">CLJ_B3884</name>
</gene>
<evidence type="ECO:0000255" key="1">
    <source>
        <dbReference type="HAMAP-Rule" id="MF_00490"/>
    </source>
</evidence>
<dbReference type="EC" id="3.1.3.71" evidence="1"/>
<dbReference type="EMBL" id="CP001083">
    <property type="protein sequence ID" value="ACQ54787.1"/>
    <property type="molecule type" value="Genomic_DNA"/>
</dbReference>
<dbReference type="RefSeq" id="WP_003361740.1">
    <property type="nucleotide sequence ID" value="NC_012658.1"/>
</dbReference>
<dbReference type="SMR" id="C3KWA9"/>
<dbReference type="KEGG" id="cbi:CLJ_B3884"/>
<dbReference type="HOGENOM" id="CLU_070028_0_0_9"/>
<dbReference type="Proteomes" id="UP000002333">
    <property type="component" value="Chromosome"/>
</dbReference>
<dbReference type="GO" id="GO:0050532">
    <property type="term" value="F:2-phosphosulfolactate phosphatase activity"/>
    <property type="evidence" value="ECO:0007669"/>
    <property type="project" value="UniProtKB-UniRule"/>
</dbReference>
<dbReference type="GO" id="GO:0000287">
    <property type="term" value="F:magnesium ion binding"/>
    <property type="evidence" value="ECO:0007669"/>
    <property type="project" value="UniProtKB-UniRule"/>
</dbReference>
<dbReference type="GO" id="GO:0050545">
    <property type="term" value="F:sulfopyruvate decarboxylase activity"/>
    <property type="evidence" value="ECO:0007669"/>
    <property type="project" value="TreeGrafter"/>
</dbReference>
<dbReference type="FunFam" id="3.90.1560.10:FF:000001">
    <property type="entry name" value="Probable 2-phosphosulfolactate phosphatase"/>
    <property type="match status" value="1"/>
</dbReference>
<dbReference type="Gene3D" id="3.90.1560.10">
    <property type="entry name" value="ComB-like"/>
    <property type="match status" value="1"/>
</dbReference>
<dbReference type="HAMAP" id="MF_00490">
    <property type="entry name" value="ComB"/>
    <property type="match status" value="1"/>
</dbReference>
<dbReference type="InterPro" id="IPR005238">
    <property type="entry name" value="ComB-like"/>
</dbReference>
<dbReference type="InterPro" id="IPR036702">
    <property type="entry name" value="ComB-like_sf"/>
</dbReference>
<dbReference type="NCBIfam" id="NF002052">
    <property type="entry name" value="PRK00886.1-1"/>
    <property type="match status" value="1"/>
</dbReference>
<dbReference type="NCBIfam" id="NF002055">
    <property type="entry name" value="PRK00886.1-4"/>
    <property type="match status" value="1"/>
</dbReference>
<dbReference type="PANTHER" id="PTHR37311">
    <property type="entry name" value="2-PHOSPHOSULFOLACTATE PHOSPHATASE-RELATED"/>
    <property type="match status" value="1"/>
</dbReference>
<dbReference type="PANTHER" id="PTHR37311:SF1">
    <property type="entry name" value="2-PHOSPHOSULFOLACTATE PHOSPHATASE-RELATED"/>
    <property type="match status" value="1"/>
</dbReference>
<dbReference type="Pfam" id="PF04029">
    <property type="entry name" value="2-ph_phosp"/>
    <property type="match status" value="1"/>
</dbReference>
<dbReference type="SUPFAM" id="SSF142823">
    <property type="entry name" value="ComB-like"/>
    <property type="match status" value="1"/>
</dbReference>
<organism>
    <name type="scientific">Clostridium botulinum (strain 657 / Type Ba4)</name>
    <dbReference type="NCBI Taxonomy" id="515621"/>
    <lineage>
        <taxon>Bacteria</taxon>
        <taxon>Bacillati</taxon>
        <taxon>Bacillota</taxon>
        <taxon>Clostridia</taxon>
        <taxon>Eubacteriales</taxon>
        <taxon>Clostridiaceae</taxon>
        <taxon>Clostridium</taxon>
    </lineage>
</organism>
<proteinExistence type="inferred from homology"/>
<sequence>MNIDIVISADHIDEKRLINKTVIIIDILRATSVITTAINNGCKKVIPVLTVEEAKDIAKNSKEDIILGGERNALKIDGFNFSNSPLEYTKKYVEGKTVVLSTTNGTRAINNSFNAKTILISALINSKATAKAIDKLNEDLIIINSGTNGQFSIDDFICSGYLIDCLYNIRKDLELSDIAKTAHYIYTNNKDIESFVKKATHYSRLKSLNLEKDLEYCFQKDIIDVVPQYKDGYIIKLNI</sequence>
<reference key="1">
    <citation type="submission" date="2008-05" db="EMBL/GenBank/DDBJ databases">
        <title>Genome sequence of Clostridium botulinum Ba4 strain 657.</title>
        <authorList>
            <person name="Shrivastava S."/>
            <person name="Brown J.L."/>
            <person name="Bruce D."/>
            <person name="Detter C."/>
            <person name="Munk C."/>
            <person name="Smith L.A."/>
            <person name="Smith T.J."/>
            <person name="Sutton G."/>
            <person name="Brettin T.S."/>
        </authorList>
    </citation>
    <scope>NUCLEOTIDE SEQUENCE [LARGE SCALE GENOMIC DNA]</scope>
    <source>
        <strain>657 / Type Ba4</strain>
    </source>
</reference>
<feature type="chain" id="PRO_1000206461" description="Probable 2-phosphosulfolactate phosphatase">
    <location>
        <begin position="1"/>
        <end position="239"/>
    </location>
</feature>
<protein>
    <recommendedName>
        <fullName evidence="1">Probable 2-phosphosulfolactate phosphatase</fullName>
        <ecNumber evidence="1">3.1.3.71</ecNumber>
    </recommendedName>
</protein>